<reference key="1">
    <citation type="journal article" date="2005" name="Science">
        <title>Life at depth: Photobacterium profundum genome sequence and expression analysis.</title>
        <authorList>
            <person name="Vezzi A."/>
            <person name="Campanaro S."/>
            <person name="D'Angelo M."/>
            <person name="Simonato F."/>
            <person name="Vitulo N."/>
            <person name="Lauro F.M."/>
            <person name="Cestaro A."/>
            <person name="Malacrida G."/>
            <person name="Simionati B."/>
            <person name="Cannata N."/>
            <person name="Romualdi C."/>
            <person name="Bartlett D.H."/>
            <person name="Valle G."/>
        </authorList>
    </citation>
    <scope>NUCLEOTIDE SEQUENCE [LARGE SCALE GENOMIC DNA]</scope>
    <source>
        <strain>ATCC BAA-1253 / SS9</strain>
    </source>
</reference>
<proteinExistence type="inferred from homology"/>
<gene>
    <name evidence="1" type="primary">mglA2</name>
    <name type="ordered locus">PBPRB1871</name>
</gene>
<dbReference type="EC" id="7.5.2.11" evidence="1"/>
<dbReference type="EMBL" id="CR378680">
    <property type="protein sequence ID" value="CAG23721.1"/>
    <property type="molecule type" value="Genomic_DNA"/>
</dbReference>
<dbReference type="RefSeq" id="WP_081470437.1">
    <property type="nucleotide sequence ID" value="NC_006371.1"/>
</dbReference>
<dbReference type="SMR" id="Q6LG59"/>
<dbReference type="STRING" id="298386.PBPRB1871"/>
<dbReference type="KEGG" id="ppr:PBPRB1871"/>
<dbReference type="eggNOG" id="COG1129">
    <property type="taxonomic scope" value="Bacteria"/>
</dbReference>
<dbReference type="HOGENOM" id="CLU_000604_92_3_6"/>
<dbReference type="Proteomes" id="UP000000593">
    <property type="component" value="Chromosome 2"/>
</dbReference>
<dbReference type="GO" id="GO:0005886">
    <property type="term" value="C:plasma membrane"/>
    <property type="evidence" value="ECO:0007669"/>
    <property type="project" value="UniProtKB-SubCell"/>
</dbReference>
<dbReference type="GO" id="GO:0005524">
    <property type="term" value="F:ATP binding"/>
    <property type="evidence" value="ECO:0007669"/>
    <property type="project" value="UniProtKB-KW"/>
</dbReference>
<dbReference type="GO" id="GO:0016887">
    <property type="term" value="F:ATP hydrolysis activity"/>
    <property type="evidence" value="ECO:0007669"/>
    <property type="project" value="InterPro"/>
</dbReference>
<dbReference type="CDD" id="cd03216">
    <property type="entry name" value="ABC_Carb_Monos_I"/>
    <property type="match status" value="1"/>
</dbReference>
<dbReference type="CDD" id="cd03215">
    <property type="entry name" value="ABC_Carb_Monos_II"/>
    <property type="match status" value="1"/>
</dbReference>
<dbReference type="FunFam" id="3.40.50.300:FF:000126">
    <property type="entry name" value="Galactose/methyl galactoside import ATP-binding protein MglA"/>
    <property type="match status" value="1"/>
</dbReference>
<dbReference type="FunFam" id="3.40.50.300:FF:000127">
    <property type="entry name" value="Ribose import ATP-binding protein RbsA"/>
    <property type="match status" value="1"/>
</dbReference>
<dbReference type="Gene3D" id="3.40.50.300">
    <property type="entry name" value="P-loop containing nucleotide triphosphate hydrolases"/>
    <property type="match status" value="2"/>
</dbReference>
<dbReference type="InterPro" id="IPR003593">
    <property type="entry name" value="AAA+_ATPase"/>
</dbReference>
<dbReference type="InterPro" id="IPR050107">
    <property type="entry name" value="ABC_carbohydrate_import_ATPase"/>
</dbReference>
<dbReference type="InterPro" id="IPR003439">
    <property type="entry name" value="ABC_transporter-like_ATP-bd"/>
</dbReference>
<dbReference type="InterPro" id="IPR017871">
    <property type="entry name" value="ABC_transporter-like_CS"/>
</dbReference>
<dbReference type="InterPro" id="IPR027417">
    <property type="entry name" value="P-loop_NTPase"/>
</dbReference>
<dbReference type="NCBIfam" id="NF008215">
    <property type="entry name" value="PRK10982.1"/>
    <property type="match status" value="1"/>
</dbReference>
<dbReference type="PANTHER" id="PTHR43790">
    <property type="entry name" value="CARBOHYDRATE TRANSPORT ATP-BINDING PROTEIN MG119-RELATED"/>
    <property type="match status" value="1"/>
</dbReference>
<dbReference type="PANTHER" id="PTHR43790:SF7">
    <property type="entry name" value="GALACTOSE_METHYL GALACTOSIDE IMPORT ATP-BINDING PROTEIN MGLA"/>
    <property type="match status" value="1"/>
</dbReference>
<dbReference type="Pfam" id="PF00005">
    <property type="entry name" value="ABC_tran"/>
    <property type="match status" value="2"/>
</dbReference>
<dbReference type="SMART" id="SM00382">
    <property type="entry name" value="AAA"/>
    <property type="match status" value="2"/>
</dbReference>
<dbReference type="SUPFAM" id="SSF52540">
    <property type="entry name" value="P-loop containing nucleoside triphosphate hydrolases"/>
    <property type="match status" value="2"/>
</dbReference>
<dbReference type="PROSITE" id="PS00211">
    <property type="entry name" value="ABC_TRANSPORTER_1"/>
    <property type="match status" value="1"/>
</dbReference>
<dbReference type="PROSITE" id="PS50893">
    <property type="entry name" value="ABC_TRANSPORTER_2"/>
    <property type="match status" value="2"/>
</dbReference>
<dbReference type="PROSITE" id="PS51260">
    <property type="entry name" value="MGLA"/>
    <property type="match status" value="1"/>
</dbReference>
<sequence length="503" mass="56245">MTTINKNEFLLEMTGISKEFPGVKALDKVNLKVRPHSIHALMGENGAGKSTLLKCLFGIYEKNEGDIVFLGKSINFSSSKEALEAGVSMVHQELNQVLQRTVMDNIWLGRYPTKGFFVDQKKMYEETKKVFEELDIDIDPNVKVATLSVSQMQMLEIAKAFSYDAKIVIMDEPTSSLTEKEVNHLFKIIKKLKEKGCGIVYISHKMEEIFEICDEITILRDGIWVDTRPLEGLTMDQIIGMMVGRELTQRFPEKTNTPKETILAVKNLTALNQPSVNDVSFELRKGEILGIAGLVGAKRTDIVETLFGIRERSSGDIILHGKHLKNKDAHEAINNGFALVTEERRSTGIYSNLDITFNSLVANVEQYKEGFGLLSNRKMKSDTQWVIDAMSVKTPSHKTMIGSLSGGNQQKIIIGRWLLTGPEILMLDEPTRGIDVGAKFEIYQLILELANKDKGIIIISSEMPELLGITDRILVMSNGRAAGIVETKNTTQNEILSLASRYL</sequence>
<protein>
    <recommendedName>
        <fullName evidence="1">Galactose/methyl galactoside import ATP-binding protein MglA 2</fullName>
        <ecNumber evidence="1">7.5.2.11</ecNumber>
    </recommendedName>
</protein>
<accession>Q6LG59</accession>
<organism>
    <name type="scientific">Photobacterium profundum (strain SS9)</name>
    <dbReference type="NCBI Taxonomy" id="298386"/>
    <lineage>
        <taxon>Bacteria</taxon>
        <taxon>Pseudomonadati</taxon>
        <taxon>Pseudomonadota</taxon>
        <taxon>Gammaproteobacteria</taxon>
        <taxon>Vibrionales</taxon>
        <taxon>Vibrionaceae</taxon>
        <taxon>Photobacterium</taxon>
    </lineage>
</organism>
<evidence type="ECO:0000255" key="1">
    <source>
        <dbReference type="HAMAP-Rule" id="MF_01717"/>
    </source>
</evidence>
<comment type="function">
    <text evidence="1">Part of the ABC transporter complex MglABC involved in galactose/methyl galactoside import. Responsible for energy coupling to the transport system.</text>
</comment>
<comment type="catalytic activity">
    <reaction evidence="1">
        <text>D-galactose(out) + ATP + H2O = D-galactose(in) + ADP + phosphate + H(+)</text>
        <dbReference type="Rhea" id="RHEA:60156"/>
        <dbReference type="ChEBI" id="CHEBI:4139"/>
        <dbReference type="ChEBI" id="CHEBI:15377"/>
        <dbReference type="ChEBI" id="CHEBI:15378"/>
        <dbReference type="ChEBI" id="CHEBI:30616"/>
        <dbReference type="ChEBI" id="CHEBI:43474"/>
        <dbReference type="ChEBI" id="CHEBI:456216"/>
        <dbReference type="EC" id="7.5.2.11"/>
    </reaction>
    <physiologicalReaction direction="left-to-right" evidence="1">
        <dbReference type="Rhea" id="RHEA:60157"/>
    </physiologicalReaction>
</comment>
<comment type="catalytic activity">
    <reaction evidence="1">
        <text>methyl beta-D-galactoside(out) + ATP + H2O = methyl beta-D-galactoside(in) + ADP + phosphate + H(+)</text>
        <dbReference type="Rhea" id="RHEA:72531"/>
        <dbReference type="ChEBI" id="CHEBI:15377"/>
        <dbReference type="ChEBI" id="CHEBI:15378"/>
        <dbReference type="ChEBI" id="CHEBI:17540"/>
        <dbReference type="ChEBI" id="CHEBI:30616"/>
        <dbReference type="ChEBI" id="CHEBI:43474"/>
        <dbReference type="ChEBI" id="CHEBI:456216"/>
    </reaction>
    <physiologicalReaction direction="left-to-right" evidence="1">
        <dbReference type="Rhea" id="RHEA:72532"/>
    </physiologicalReaction>
</comment>
<comment type="subunit">
    <text evidence="1">The complex is composed of one ATP-binding protein (MglA), two transmembrane proteins (MglC) and a solute-binding protein (MglB).</text>
</comment>
<comment type="subcellular location">
    <subcellularLocation>
        <location evidence="1">Cell inner membrane</location>
        <topology evidence="1">Peripheral membrane protein</topology>
    </subcellularLocation>
</comment>
<comment type="similarity">
    <text evidence="1">Belongs to the ABC transporter superfamily. Galactose/methyl galactoside importer (TC 3.A.1.2.3) family.</text>
</comment>
<keyword id="KW-0067">ATP-binding</keyword>
<keyword id="KW-0997">Cell inner membrane</keyword>
<keyword id="KW-1003">Cell membrane</keyword>
<keyword id="KW-0472">Membrane</keyword>
<keyword id="KW-0547">Nucleotide-binding</keyword>
<keyword id="KW-1185">Reference proteome</keyword>
<keyword id="KW-0677">Repeat</keyword>
<keyword id="KW-0762">Sugar transport</keyword>
<keyword id="KW-1278">Translocase</keyword>
<keyword id="KW-0813">Transport</keyword>
<name>MGLA2_PHOPR</name>
<feature type="chain" id="PRO_0000261372" description="Galactose/methyl galactoside import ATP-binding protein MglA 2">
    <location>
        <begin position="1"/>
        <end position="503"/>
    </location>
</feature>
<feature type="domain" description="ABC transporter 1" evidence="1">
    <location>
        <begin position="11"/>
        <end position="246"/>
    </location>
</feature>
<feature type="domain" description="ABC transporter 2" evidence="1">
    <location>
        <begin position="257"/>
        <end position="503"/>
    </location>
</feature>
<feature type="binding site" evidence="1">
    <location>
        <begin position="43"/>
        <end position="50"/>
    </location>
    <ligand>
        <name>ATP</name>
        <dbReference type="ChEBI" id="CHEBI:30616"/>
    </ligand>
</feature>